<name>SECA_PELTS</name>
<sequence length="886" mass="100887">MLGFIKDWLDDNAREIKKLQRVVDEINKLEPEIAAKSDGDLQGMTAVFRDRLDRGESLDGILPEAFAVVREASRRVLGMRHFDVQLMGGIVLHQGRIAEMKTGEGKTLVATLPVYLNALTGKGVHVVTVNDYLARRDSEWMGQVYKYLGLSVGLIVHGLDWEERKRSYRADVTYGTNNEFGFDYLRDNMALHPDQLVQRELNYAIVDEVDSILIDEARTPLIISGQAEKSTDLYYTFARIVPRLVPEVDYNVDEKAHTVVITETGVAKVEKMLGVENLYDDRNIELTHHLNQALKAHALMKRDRDYVVKDGQVIIVDEFTGRLMFGRRYSDGLHQAIEAKEGVKIERESQTLATITFQNYFRMYRKLAGMTGTAATEEQEFKKIYGLDVVVIPTNKPMIRKDLPDVIYKTEQAKFRAVVEEIAARHARGQPVLVGTISIEKSEMLSGMLKKRGIPHQVLNAKYHDKEAEIVAQAGRLGAVTIATNMAGRGTDILLGGNPEFLARNELRRMGHECEAAAEIAGAPAEQDGAYKALLEKFRRQTEEERRRVVELGGLHIIGTERHESRRIDNQLRGRCGRQGDPGSSQFFSSLEDDLMRLFGSENIAGIMDRLGIDEDMPIEHAMITKSIEAAQKRVENRNFDIRKHVLQYDDVMNQQRELIYRQRRQVLTGENLKENVLEMIGTCVERAVNTYAPEGVHPEEWDLKGLLEHAEHLFLPGHGLTAGDLAGMSRRELQEFLTERSRAAYDAREQELGADTMREIERVIMLRIVDEKWMDHLDAMDQLREGIGLRAYGQKDPLVEYKFEGYEMFQNMIASIQDDVVRYIFRVNVVQPQQQRQSRRVVENRYAEEGPKQPARRENKVGRNDPCPCGSGRKYKKCCGRAEAV</sequence>
<protein>
    <recommendedName>
        <fullName evidence="1">Protein translocase subunit SecA</fullName>
        <ecNumber evidence="1">7.4.2.8</ecNumber>
    </recommendedName>
</protein>
<proteinExistence type="inferred from homology"/>
<organism>
    <name type="scientific">Pelotomaculum thermopropionicum (strain DSM 13744 / JCM 10971 / SI)</name>
    <dbReference type="NCBI Taxonomy" id="370438"/>
    <lineage>
        <taxon>Bacteria</taxon>
        <taxon>Bacillati</taxon>
        <taxon>Bacillota</taxon>
        <taxon>Clostridia</taxon>
        <taxon>Eubacteriales</taxon>
        <taxon>Desulfotomaculaceae</taxon>
        <taxon>Pelotomaculum</taxon>
    </lineage>
</organism>
<accession>A5CYJ1</accession>
<reference key="1">
    <citation type="journal article" date="2008" name="Genome Res.">
        <title>The genome of Pelotomaculum thermopropionicum reveals niche-associated evolution in anaerobic microbiota.</title>
        <authorList>
            <person name="Kosaka T."/>
            <person name="Kato S."/>
            <person name="Shimoyama T."/>
            <person name="Ishii S."/>
            <person name="Abe T."/>
            <person name="Watanabe K."/>
        </authorList>
    </citation>
    <scope>NUCLEOTIDE SEQUENCE [LARGE SCALE GENOMIC DNA]</scope>
    <source>
        <strain>DSM 13744 / JCM 10971 / SI</strain>
    </source>
</reference>
<feature type="chain" id="PRO_1000087323" description="Protein translocase subunit SecA">
    <location>
        <begin position="1"/>
        <end position="886"/>
    </location>
</feature>
<feature type="region of interest" description="Disordered" evidence="2">
    <location>
        <begin position="841"/>
        <end position="866"/>
    </location>
</feature>
<feature type="compositionally biased region" description="Basic and acidic residues" evidence="2">
    <location>
        <begin position="841"/>
        <end position="864"/>
    </location>
</feature>
<feature type="binding site" evidence="1">
    <location>
        <position position="85"/>
    </location>
    <ligand>
        <name>ATP</name>
        <dbReference type="ChEBI" id="CHEBI:30616"/>
    </ligand>
</feature>
<feature type="binding site" evidence="1">
    <location>
        <begin position="103"/>
        <end position="107"/>
    </location>
    <ligand>
        <name>ATP</name>
        <dbReference type="ChEBI" id="CHEBI:30616"/>
    </ligand>
</feature>
<feature type="binding site" evidence="1">
    <location>
        <position position="492"/>
    </location>
    <ligand>
        <name>ATP</name>
        <dbReference type="ChEBI" id="CHEBI:30616"/>
    </ligand>
</feature>
<feature type="binding site" evidence="1">
    <location>
        <position position="868"/>
    </location>
    <ligand>
        <name>Zn(2+)</name>
        <dbReference type="ChEBI" id="CHEBI:29105"/>
    </ligand>
</feature>
<feature type="binding site" evidence="1">
    <location>
        <position position="870"/>
    </location>
    <ligand>
        <name>Zn(2+)</name>
        <dbReference type="ChEBI" id="CHEBI:29105"/>
    </ligand>
</feature>
<feature type="binding site" evidence="1">
    <location>
        <position position="879"/>
    </location>
    <ligand>
        <name>Zn(2+)</name>
        <dbReference type="ChEBI" id="CHEBI:29105"/>
    </ligand>
</feature>
<feature type="binding site" evidence="1">
    <location>
        <position position="880"/>
    </location>
    <ligand>
        <name>Zn(2+)</name>
        <dbReference type="ChEBI" id="CHEBI:29105"/>
    </ligand>
</feature>
<evidence type="ECO:0000255" key="1">
    <source>
        <dbReference type="HAMAP-Rule" id="MF_01382"/>
    </source>
</evidence>
<evidence type="ECO:0000256" key="2">
    <source>
        <dbReference type="SAM" id="MobiDB-lite"/>
    </source>
</evidence>
<gene>
    <name evidence="1" type="primary">secA</name>
    <name type="ordered locus">PTH_2753</name>
</gene>
<keyword id="KW-0067">ATP-binding</keyword>
<keyword id="KW-1003">Cell membrane</keyword>
<keyword id="KW-0963">Cytoplasm</keyword>
<keyword id="KW-0472">Membrane</keyword>
<keyword id="KW-0479">Metal-binding</keyword>
<keyword id="KW-0547">Nucleotide-binding</keyword>
<keyword id="KW-0653">Protein transport</keyword>
<keyword id="KW-1185">Reference proteome</keyword>
<keyword id="KW-1278">Translocase</keyword>
<keyword id="KW-0811">Translocation</keyword>
<keyword id="KW-0813">Transport</keyword>
<keyword id="KW-0862">Zinc</keyword>
<dbReference type="EC" id="7.4.2.8" evidence="1"/>
<dbReference type="EMBL" id="AP009389">
    <property type="protein sequence ID" value="BAF60934.1"/>
    <property type="molecule type" value="Genomic_DNA"/>
</dbReference>
<dbReference type="SMR" id="A5CYJ1"/>
<dbReference type="STRING" id="370438.PTH_2753"/>
<dbReference type="KEGG" id="pth:PTH_2753"/>
<dbReference type="eggNOG" id="COG0653">
    <property type="taxonomic scope" value="Bacteria"/>
</dbReference>
<dbReference type="HOGENOM" id="CLU_005314_3_0_9"/>
<dbReference type="Proteomes" id="UP000006556">
    <property type="component" value="Chromosome"/>
</dbReference>
<dbReference type="GO" id="GO:0031522">
    <property type="term" value="C:cell envelope Sec protein transport complex"/>
    <property type="evidence" value="ECO:0007669"/>
    <property type="project" value="TreeGrafter"/>
</dbReference>
<dbReference type="GO" id="GO:0005829">
    <property type="term" value="C:cytosol"/>
    <property type="evidence" value="ECO:0007669"/>
    <property type="project" value="TreeGrafter"/>
</dbReference>
<dbReference type="GO" id="GO:0005886">
    <property type="term" value="C:plasma membrane"/>
    <property type="evidence" value="ECO:0007669"/>
    <property type="project" value="UniProtKB-SubCell"/>
</dbReference>
<dbReference type="GO" id="GO:0005524">
    <property type="term" value="F:ATP binding"/>
    <property type="evidence" value="ECO:0007669"/>
    <property type="project" value="UniProtKB-UniRule"/>
</dbReference>
<dbReference type="GO" id="GO:0046872">
    <property type="term" value="F:metal ion binding"/>
    <property type="evidence" value="ECO:0007669"/>
    <property type="project" value="UniProtKB-KW"/>
</dbReference>
<dbReference type="GO" id="GO:0008564">
    <property type="term" value="F:protein-exporting ATPase activity"/>
    <property type="evidence" value="ECO:0007669"/>
    <property type="project" value="UniProtKB-EC"/>
</dbReference>
<dbReference type="GO" id="GO:0065002">
    <property type="term" value="P:intracellular protein transmembrane transport"/>
    <property type="evidence" value="ECO:0007669"/>
    <property type="project" value="UniProtKB-UniRule"/>
</dbReference>
<dbReference type="GO" id="GO:0017038">
    <property type="term" value="P:protein import"/>
    <property type="evidence" value="ECO:0007669"/>
    <property type="project" value="InterPro"/>
</dbReference>
<dbReference type="GO" id="GO:0006605">
    <property type="term" value="P:protein targeting"/>
    <property type="evidence" value="ECO:0007669"/>
    <property type="project" value="UniProtKB-UniRule"/>
</dbReference>
<dbReference type="GO" id="GO:0043952">
    <property type="term" value="P:protein transport by the Sec complex"/>
    <property type="evidence" value="ECO:0007669"/>
    <property type="project" value="TreeGrafter"/>
</dbReference>
<dbReference type="CDD" id="cd17928">
    <property type="entry name" value="DEXDc_SecA"/>
    <property type="match status" value="1"/>
</dbReference>
<dbReference type="CDD" id="cd18803">
    <property type="entry name" value="SF2_C_secA"/>
    <property type="match status" value="1"/>
</dbReference>
<dbReference type="FunFam" id="1.10.3060.10:FF:000002">
    <property type="entry name" value="Preprotein translocase subunit SecA"/>
    <property type="match status" value="1"/>
</dbReference>
<dbReference type="FunFam" id="3.40.50.300:FF:000113">
    <property type="entry name" value="Preprotein translocase subunit SecA"/>
    <property type="match status" value="1"/>
</dbReference>
<dbReference type="FunFam" id="3.40.50.300:FF:000334">
    <property type="entry name" value="Protein translocase subunit SecA"/>
    <property type="match status" value="1"/>
</dbReference>
<dbReference type="FunFam" id="3.90.1440.10:FF:000002">
    <property type="entry name" value="Protein translocase subunit SecA"/>
    <property type="match status" value="1"/>
</dbReference>
<dbReference type="Gene3D" id="1.10.3060.10">
    <property type="entry name" value="Helical scaffold and wing domains of SecA"/>
    <property type="match status" value="1"/>
</dbReference>
<dbReference type="Gene3D" id="3.40.50.300">
    <property type="entry name" value="P-loop containing nucleotide triphosphate hydrolases"/>
    <property type="match status" value="2"/>
</dbReference>
<dbReference type="Gene3D" id="3.90.1440.10">
    <property type="entry name" value="SecA, preprotein cross-linking domain"/>
    <property type="match status" value="1"/>
</dbReference>
<dbReference type="HAMAP" id="MF_01382">
    <property type="entry name" value="SecA"/>
    <property type="match status" value="1"/>
</dbReference>
<dbReference type="InterPro" id="IPR014001">
    <property type="entry name" value="Helicase_ATP-bd"/>
</dbReference>
<dbReference type="InterPro" id="IPR027417">
    <property type="entry name" value="P-loop_NTPase"/>
</dbReference>
<dbReference type="InterPro" id="IPR004027">
    <property type="entry name" value="SEC_C_motif"/>
</dbReference>
<dbReference type="InterPro" id="IPR000185">
    <property type="entry name" value="SecA"/>
</dbReference>
<dbReference type="InterPro" id="IPR020937">
    <property type="entry name" value="SecA_CS"/>
</dbReference>
<dbReference type="InterPro" id="IPR011115">
    <property type="entry name" value="SecA_DEAD"/>
</dbReference>
<dbReference type="InterPro" id="IPR014018">
    <property type="entry name" value="SecA_motor_DEAD"/>
</dbReference>
<dbReference type="InterPro" id="IPR011130">
    <property type="entry name" value="SecA_preprotein_X-link_dom"/>
</dbReference>
<dbReference type="InterPro" id="IPR044722">
    <property type="entry name" value="SecA_SF2_C"/>
</dbReference>
<dbReference type="InterPro" id="IPR011116">
    <property type="entry name" value="SecA_Wing/Scaffold"/>
</dbReference>
<dbReference type="InterPro" id="IPR036266">
    <property type="entry name" value="SecA_Wing/Scaffold_sf"/>
</dbReference>
<dbReference type="InterPro" id="IPR036670">
    <property type="entry name" value="SecA_X-link_sf"/>
</dbReference>
<dbReference type="NCBIfam" id="NF009538">
    <property type="entry name" value="PRK12904.1"/>
    <property type="match status" value="1"/>
</dbReference>
<dbReference type="NCBIfam" id="TIGR00963">
    <property type="entry name" value="secA"/>
    <property type="match status" value="1"/>
</dbReference>
<dbReference type="PANTHER" id="PTHR30612:SF0">
    <property type="entry name" value="CHLOROPLAST PROTEIN-TRANSPORTING ATPASE"/>
    <property type="match status" value="1"/>
</dbReference>
<dbReference type="PANTHER" id="PTHR30612">
    <property type="entry name" value="SECA INNER MEMBRANE COMPONENT OF SEC PROTEIN SECRETION SYSTEM"/>
    <property type="match status" value="1"/>
</dbReference>
<dbReference type="Pfam" id="PF21090">
    <property type="entry name" value="P-loop_SecA"/>
    <property type="match status" value="1"/>
</dbReference>
<dbReference type="Pfam" id="PF02810">
    <property type="entry name" value="SEC-C"/>
    <property type="match status" value="1"/>
</dbReference>
<dbReference type="Pfam" id="PF07517">
    <property type="entry name" value="SecA_DEAD"/>
    <property type="match status" value="1"/>
</dbReference>
<dbReference type="Pfam" id="PF01043">
    <property type="entry name" value="SecA_PP_bind"/>
    <property type="match status" value="1"/>
</dbReference>
<dbReference type="Pfam" id="PF07516">
    <property type="entry name" value="SecA_SW"/>
    <property type="match status" value="1"/>
</dbReference>
<dbReference type="PRINTS" id="PR00906">
    <property type="entry name" value="SECA"/>
</dbReference>
<dbReference type="SMART" id="SM00957">
    <property type="entry name" value="SecA_DEAD"/>
    <property type="match status" value="1"/>
</dbReference>
<dbReference type="SMART" id="SM00958">
    <property type="entry name" value="SecA_PP_bind"/>
    <property type="match status" value="1"/>
</dbReference>
<dbReference type="SUPFAM" id="SSF81886">
    <property type="entry name" value="Helical scaffold and wing domains of SecA"/>
    <property type="match status" value="1"/>
</dbReference>
<dbReference type="SUPFAM" id="SSF52540">
    <property type="entry name" value="P-loop containing nucleoside triphosphate hydrolases"/>
    <property type="match status" value="2"/>
</dbReference>
<dbReference type="SUPFAM" id="SSF81767">
    <property type="entry name" value="Pre-protein crosslinking domain of SecA"/>
    <property type="match status" value="1"/>
</dbReference>
<dbReference type="PROSITE" id="PS01312">
    <property type="entry name" value="SECA"/>
    <property type="match status" value="1"/>
</dbReference>
<dbReference type="PROSITE" id="PS51196">
    <property type="entry name" value="SECA_MOTOR_DEAD"/>
    <property type="match status" value="1"/>
</dbReference>
<comment type="function">
    <text evidence="1">Part of the Sec protein translocase complex. Interacts with the SecYEG preprotein conducting channel. Has a central role in coupling the hydrolysis of ATP to the transfer of proteins into and across the cell membrane, serving as an ATP-driven molecular motor driving the stepwise translocation of polypeptide chains across the membrane.</text>
</comment>
<comment type="catalytic activity">
    <reaction evidence="1">
        <text>ATP + H2O + cellular proteinSide 1 = ADP + phosphate + cellular proteinSide 2.</text>
        <dbReference type="EC" id="7.4.2.8"/>
    </reaction>
</comment>
<comment type="cofactor">
    <cofactor evidence="1">
        <name>Zn(2+)</name>
        <dbReference type="ChEBI" id="CHEBI:29105"/>
    </cofactor>
    <text evidence="1">May bind 1 zinc ion per subunit.</text>
</comment>
<comment type="subunit">
    <text evidence="1">Monomer and homodimer. Part of the essential Sec protein translocation apparatus which comprises SecA, SecYEG and auxiliary proteins SecDF. Other proteins may also be involved.</text>
</comment>
<comment type="subcellular location">
    <subcellularLocation>
        <location evidence="1">Cell membrane</location>
        <topology evidence="1">Peripheral membrane protein</topology>
        <orientation evidence="1">Cytoplasmic side</orientation>
    </subcellularLocation>
    <subcellularLocation>
        <location evidence="1">Cytoplasm</location>
    </subcellularLocation>
    <text evidence="1">Distribution is 50-50.</text>
</comment>
<comment type="similarity">
    <text evidence="1">Belongs to the SecA family.</text>
</comment>